<accession>Q1MGP8</accession>
<evidence type="ECO:0000255" key="1">
    <source>
        <dbReference type="HAMAP-Rule" id="MF_01631"/>
    </source>
</evidence>
<feature type="chain" id="PRO_0000263148" description="Bifunctional protein GlmU">
    <location>
        <begin position="1"/>
        <end position="453"/>
    </location>
</feature>
<feature type="region of interest" description="Pyrophosphorylase" evidence="1">
    <location>
        <begin position="1"/>
        <end position="231"/>
    </location>
</feature>
<feature type="region of interest" description="Linker" evidence="1">
    <location>
        <begin position="232"/>
        <end position="252"/>
    </location>
</feature>
<feature type="region of interest" description="N-acetyltransferase" evidence="1">
    <location>
        <begin position="253"/>
        <end position="453"/>
    </location>
</feature>
<feature type="active site" description="Proton acceptor" evidence="1">
    <location>
        <position position="348"/>
    </location>
</feature>
<feature type="binding site" evidence="1">
    <location>
        <begin position="10"/>
        <end position="13"/>
    </location>
    <ligand>
        <name>UDP-N-acetyl-alpha-D-glucosamine</name>
        <dbReference type="ChEBI" id="CHEBI:57705"/>
    </ligand>
</feature>
<feature type="binding site" evidence="1">
    <location>
        <position position="24"/>
    </location>
    <ligand>
        <name>UDP-N-acetyl-alpha-D-glucosamine</name>
        <dbReference type="ChEBI" id="CHEBI:57705"/>
    </ligand>
</feature>
<feature type="binding site" evidence="1">
    <location>
        <position position="77"/>
    </location>
    <ligand>
        <name>UDP-N-acetyl-alpha-D-glucosamine</name>
        <dbReference type="ChEBI" id="CHEBI:57705"/>
    </ligand>
</feature>
<feature type="binding site" evidence="1">
    <location>
        <begin position="82"/>
        <end position="83"/>
    </location>
    <ligand>
        <name>UDP-N-acetyl-alpha-D-glucosamine</name>
        <dbReference type="ChEBI" id="CHEBI:57705"/>
    </ligand>
</feature>
<feature type="binding site" evidence="1">
    <location>
        <begin position="105"/>
        <end position="107"/>
    </location>
    <ligand>
        <name>UDP-N-acetyl-alpha-D-glucosamine</name>
        <dbReference type="ChEBI" id="CHEBI:57705"/>
    </ligand>
</feature>
<feature type="binding site" evidence="1">
    <location>
        <position position="107"/>
    </location>
    <ligand>
        <name>Mg(2+)</name>
        <dbReference type="ChEBI" id="CHEBI:18420"/>
    </ligand>
</feature>
<feature type="binding site" evidence="1">
    <location>
        <position position="143"/>
    </location>
    <ligand>
        <name>UDP-N-acetyl-alpha-D-glucosamine</name>
        <dbReference type="ChEBI" id="CHEBI:57705"/>
    </ligand>
</feature>
<feature type="binding site" evidence="1">
    <location>
        <position position="157"/>
    </location>
    <ligand>
        <name>UDP-N-acetyl-alpha-D-glucosamine</name>
        <dbReference type="ChEBI" id="CHEBI:57705"/>
    </ligand>
</feature>
<feature type="binding site" evidence="1">
    <location>
        <position position="172"/>
    </location>
    <ligand>
        <name>UDP-N-acetyl-alpha-D-glucosamine</name>
        <dbReference type="ChEBI" id="CHEBI:57705"/>
    </ligand>
</feature>
<feature type="binding site" evidence="1">
    <location>
        <position position="229"/>
    </location>
    <ligand>
        <name>Mg(2+)</name>
        <dbReference type="ChEBI" id="CHEBI:18420"/>
    </ligand>
</feature>
<feature type="binding site" evidence="1">
    <location>
        <position position="229"/>
    </location>
    <ligand>
        <name>UDP-N-acetyl-alpha-D-glucosamine</name>
        <dbReference type="ChEBI" id="CHEBI:57705"/>
    </ligand>
</feature>
<feature type="binding site" evidence="1">
    <location>
        <position position="318"/>
    </location>
    <ligand>
        <name>UDP-N-acetyl-alpha-D-glucosamine</name>
        <dbReference type="ChEBI" id="CHEBI:57705"/>
    </ligand>
</feature>
<feature type="binding site" evidence="1">
    <location>
        <position position="336"/>
    </location>
    <ligand>
        <name>UDP-N-acetyl-alpha-D-glucosamine</name>
        <dbReference type="ChEBI" id="CHEBI:57705"/>
    </ligand>
</feature>
<feature type="binding site" evidence="1">
    <location>
        <position position="351"/>
    </location>
    <ligand>
        <name>UDP-N-acetyl-alpha-D-glucosamine</name>
        <dbReference type="ChEBI" id="CHEBI:57705"/>
    </ligand>
</feature>
<feature type="binding site" evidence="1">
    <location>
        <position position="362"/>
    </location>
    <ligand>
        <name>UDP-N-acetyl-alpha-D-glucosamine</name>
        <dbReference type="ChEBI" id="CHEBI:57705"/>
    </ligand>
</feature>
<feature type="binding site" evidence="1">
    <location>
        <position position="365"/>
    </location>
    <ligand>
        <name>acetyl-CoA</name>
        <dbReference type="ChEBI" id="CHEBI:57288"/>
    </ligand>
</feature>
<feature type="binding site" evidence="1">
    <location>
        <begin position="371"/>
        <end position="372"/>
    </location>
    <ligand>
        <name>acetyl-CoA</name>
        <dbReference type="ChEBI" id="CHEBI:57288"/>
    </ligand>
</feature>
<feature type="binding site" evidence="1">
    <location>
        <position position="390"/>
    </location>
    <ligand>
        <name>acetyl-CoA</name>
        <dbReference type="ChEBI" id="CHEBI:57288"/>
    </ligand>
</feature>
<feature type="binding site" evidence="1">
    <location>
        <position position="408"/>
    </location>
    <ligand>
        <name>acetyl-CoA</name>
        <dbReference type="ChEBI" id="CHEBI:57288"/>
    </ligand>
</feature>
<feature type="binding site" evidence="1">
    <location>
        <position position="425"/>
    </location>
    <ligand>
        <name>acetyl-CoA</name>
        <dbReference type="ChEBI" id="CHEBI:57288"/>
    </ligand>
</feature>
<comment type="function">
    <text evidence="1">Catalyzes the last two sequential reactions in the de novo biosynthetic pathway for UDP-N-acetylglucosamine (UDP-GlcNAc). The C-terminal domain catalyzes the transfer of acetyl group from acetyl coenzyme A to glucosamine-1-phosphate (GlcN-1-P) to produce N-acetylglucosamine-1-phosphate (GlcNAc-1-P), which is converted into UDP-GlcNAc by the transfer of uridine 5-monophosphate (from uridine 5-triphosphate), a reaction catalyzed by the N-terminal domain.</text>
</comment>
<comment type="catalytic activity">
    <reaction evidence="1">
        <text>alpha-D-glucosamine 1-phosphate + acetyl-CoA = N-acetyl-alpha-D-glucosamine 1-phosphate + CoA + H(+)</text>
        <dbReference type="Rhea" id="RHEA:13725"/>
        <dbReference type="ChEBI" id="CHEBI:15378"/>
        <dbReference type="ChEBI" id="CHEBI:57287"/>
        <dbReference type="ChEBI" id="CHEBI:57288"/>
        <dbReference type="ChEBI" id="CHEBI:57776"/>
        <dbReference type="ChEBI" id="CHEBI:58516"/>
        <dbReference type="EC" id="2.3.1.157"/>
    </reaction>
</comment>
<comment type="catalytic activity">
    <reaction evidence="1">
        <text>N-acetyl-alpha-D-glucosamine 1-phosphate + UTP + H(+) = UDP-N-acetyl-alpha-D-glucosamine + diphosphate</text>
        <dbReference type="Rhea" id="RHEA:13509"/>
        <dbReference type="ChEBI" id="CHEBI:15378"/>
        <dbReference type="ChEBI" id="CHEBI:33019"/>
        <dbReference type="ChEBI" id="CHEBI:46398"/>
        <dbReference type="ChEBI" id="CHEBI:57705"/>
        <dbReference type="ChEBI" id="CHEBI:57776"/>
        <dbReference type="EC" id="2.7.7.23"/>
    </reaction>
</comment>
<comment type="cofactor">
    <cofactor evidence="1">
        <name>Mg(2+)</name>
        <dbReference type="ChEBI" id="CHEBI:18420"/>
    </cofactor>
    <text evidence="1">Binds 1 Mg(2+) ion per subunit.</text>
</comment>
<comment type="pathway">
    <text evidence="1">Nucleotide-sugar biosynthesis; UDP-N-acetyl-alpha-D-glucosamine biosynthesis; N-acetyl-alpha-D-glucosamine 1-phosphate from alpha-D-glucosamine 6-phosphate (route II): step 2/2.</text>
</comment>
<comment type="pathway">
    <text evidence="1">Nucleotide-sugar biosynthesis; UDP-N-acetyl-alpha-D-glucosamine biosynthesis; UDP-N-acetyl-alpha-D-glucosamine from N-acetyl-alpha-D-glucosamine 1-phosphate: step 1/1.</text>
</comment>
<comment type="pathway">
    <text evidence="1">Bacterial outer membrane biogenesis; LPS lipid A biosynthesis.</text>
</comment>
<comment type="subunit">
    <text evidence="1">Homotrimer.</text>
</comment>
<comment type="subcellular location">
    <subcellularLocation>
        <location evidence="1">Cytoplasm</location>
    </subcellularLocation>
</comment>
<comment type="similarity">
    <text evidence="1">In the N-terminal section; belongs to the N-acetylglucosamine-1-phosphate uridyltransferase family.</text>
</comment>
<comment type="similarity">
    <text evidence="1">In the C-terminal section; belongs to the transferase hexapeptide repeat family.</text>
</comment>
<organism>
    <name type="scientific">Rhizobium johnstonii (strain DSM 114642 / LMG 32736 / 3841)</name>
    <name type="common">Rhizobium leguminosarum bv. viciae</name>
    <dbReference type="NCBI Taxonomy" id="216596"/>
    <lineage>
        <taxon>Bacteria</taxon>
        <taxon>Pseudomonadati</taxon>
        <taxon>Pseudomonadota</taxon>
        <taxon>Alphaproteobacteria</taxon>
        <taxon>Hyphomicrobiales</taxon>
        <taxon>Rhizobiaceae</taxon>
        <taxon>Rhizobium/Agrobacterium group</taxon>
        <taxon>Rhizobium</taxon>
        <taxon>Rhizobium johnstonii</taxon>
    </lineage>
</organism>
<sequence>MERTCLAVILAAGDSTRMKSSKSKVLHPVAGRPMIAHVVEAVASAGISSVALVVGRDAEDVAKAASIAGVDIESFLQKERLGTGHAVLAAREAIAKGYDDILVTYGDVPLQTDGPLKAARQGLADGSDVVVIGFHTDRPTGYGRLLVKDGELIAIREEKDATDAERTVTWCNSGLMAINGRKALDLLSRIGNANAKGEFYLTDLVEIARSLGGRVTAVDAPEIEMTGCNTRAELAVIERFWQERRRHQMMLSGVTMIAPETVFLAYDTVIGQDALIEPNVVFGPGAVIDSGAVIHAFSHIEGAHVSQGATVGPFARLRPGADLGTGSKVGNFCEVKNGRLGEGAKVNHLTYIGDAVIGAGSNIGAGTITCNYDGVNKSETVIGENAFIGSNSSLVAPVTIGDGAYIASGSVITVNVPADALALGRARQEIKTGRATLLRERALAIKAAKKAKA</sequence>
<dbReference type="EC" id="2.7.7.23" evidence="1"/>
<dbReference type="EC" id="2.3.1.157" evidence="1"/>
<dbReference type="EMBL" id="AM236080">
    <property type="protein sequence ID" value="CAK07871.1"/>
    <property type="molecule type" value="Genomic_DNA"/>
</dbReference>
<dbReference type="RefSeq" id="WP_011651951.1">
    <property type="nucleotide sequence ID" value="NC_008380.1"/>
</dbReference>
<dbReference type="SMR" id="Q1MGP8"/>
<dbReference type="EnsemblBacteria" id="CAK07871">
    <property type="protein sequence ID" value="CAK07871"/>
    <property type="gene ID" value="RL2381"/>
</dbReference>
<dbReference type="KEGG" id="rle:RL2381"/>
<dbReference type="eggNOG" id="COG1207">
    <property type="taxonomic scope" value="Bacteria"/>
</dbReference>
<dbReference type="HOGENOM" id="CLU_029499_15_2_5"/>
<dbReference type="UniPathway" id="UPA00113">
    <property type="reaction ID" value="UER00532"/>
</dbReference>
<dbReference type="UniPathway" id="UPA00113">
    <property type="reaction ID" value="UER00533"/>
</dbReference>
<dbReference type="UniPathway" id="UPA00973"/>
<dbReference type="Proteomes" id="UP000006575">
    <property type="component" value="Chromosome"/>
</dbReference>
<dbReference type="GO" id="GO:0005737">
    <property type="term" value="C:cytoplasm"/>
    <property type="evidence" value="ECO:0007669"/>
    <property type="project" value="UniProtKB-SubCell"/>
</dbReference>
<dbReference type="GO" id="GO:0016020">
    <property type="term" value="C:membrane"/>
    <property type="evidence" value="ECO:0007669"/>
    <property type="project" value="GOC"/>
</dbReference>
<dbReference type="GO" id="GO:0019134">
    <property type="term" value="F:glucosamine-1-phosphate N-acetyltransferase activity"/>
    <property type="evidence" value="ECO:0007669"/>
    <property type="project" value="UniProtKB-UniRule"/>
</dbReference>
<dbReference type="GO" id="GO:0000287">
    <property type="term" value="F:magnesium ion binding"/>
    <property type="evidence" value="ECO:0007669"/>
    <property type="project" value="UniProtKB-UniRule"/>
</dbReference>
<dbReference type="GO" id="GO:0003977">
    <property type="term" value="F:UDP-N-acetylglucosamine diphosphorylase activity"/>
    <property type="evidence" value="ECO:0007669"/>
    <property type="project" value="UniProtKB-UniRule"/>
</dbReference>
<dbReference type="GO" id="GO:0000902">
    <property type="term" value="P:cell morphogenesis"/>
    <property type="evidence" value="ECO:0007669"/>
    <property type="project" value="UniProtKB-UniRule"/>
</dbReference>
<dbReference type="GO" id="GO:0071555">
    <property type="term" value="P:cell wall organization"/>
    <property type="evidence" value="ECO:0007669"/>
    <property type="project" value="UniProtKB-KW"/>
</dbReference>
<dbReference type="GO" id="GO:0009245">
    <property type="term" value="P:lipid A biosynthetic process"/>
    <property type="evidence" value="ECO:0007669"/>
    <property type="project" value="UniProtKB-UniRule"/>
</dbReference>
<dbReference type="GO" id="GO:0009252">
    <property type="term" value="P:peptidoglycan biosynthetic process"/>
    <property type="evidence" value="ECO:0007669"/>
    <property type="project" value="UniProtKB-UniRule"/>
</dbReference>
<dbReference type="GO" id="GO:0008360">
    <property type="term" value="P:regulation of cell shape"/>
    <property type="evidence" value="ECO:0007669"/>
    <property type="project" value="UniProtKB-KW"/>
</dbReference>
<dbReference type="GO" id="GO:0006048">
    <property type="term" value="P:UDP-N-acetylglucosamine biosynthetic process"/>
    <property type="evidence" value="ECO:0007669"/>
    <property type="project" value="UniProtKB-UniPathway"/>
</dbReference>
<dbReference type="CDD" id="cd02540">
    <property type="entry name" value="GT2_GlmU_N_bac"/>
    <property type="match status" value="1"/>
</dbReference>
<dbReference type="CDD" id="cd03353">
    <property type="entry name" value="LbH_GlmU_C"/>
    <property type="match status" value="1"/>
</dbReference>
<dbReference type="Gene3D" id="2.160.10.10">
    <property type="entry name" value="Hexapeptide repeat proteins"/>
    <property type="match status" value="1"/>
</dbReference>
<dbReference type="Gene3D" id="3.90.550.10">
    <property type="entry name" value="Spore Coat Polysaccharide Biosynthesis Protein SpsA, Chain A"/>
    <property type="match status" value="1"/>
</dbReference>
<dbReference type="HAMAP" id="MF_01631">
    <property type="entry name" value="GlmU"/>
    <property type="match status" value="1"/>
</dbReference>
<dbReference type="InterPro" id="IPR005882">
    <property type="entry name" value="Bifunctional_GlmU"/>
</dbReference>
<dbReference type="InterPro" id="IPR050065">
    <property type="entry name" value="GlmU-like"/>
</dbReference>
<dbReference type="InterPro" id="IPR038009">
    <property type="entry name" value="GlmU_C_LbH"/>
</dbReference>
<dbReference type="InterPro" id="IPR001451">
    <property type="entry name" value="Hexapep"/>
</dbReference>
<dbReference type="InterPro" id="IPR018357">
    <property type="entry name" value="Hexapep_transf_CS"/>
</dbReference>
<dbReference type="InterPro" id="IPR025877">
    <property type="entry name" value="MobA-like_NTP_Trfase"/>
</dbReference>
<dbReference type="InterPro" id="IPR029044">
    <property type="entry name" value="Nucleotide-diphossugar_trans"/>
</dbReference>
<dbReference type="InterPro" id="IPR011004">
    <property type="entry name" value="Trimer_LpxA-like_sf"/>
</dbReference>
<dbReference type="NCBIfam" id="TIGR01173">
    <property type="entry name" value="glmU"/>
    <property type="match status" value="1"/>
</dbReference>
<dbReference type="NCBIfam" id="NF010933">
    <property type="entry name" value="PRK14353.1"/>
    <property type="match status" value="1"/>
</dbReference>
<dbReference type="PANTHER" id="PTHR43584:SF3">
    <property type="entry name" value="BIFUNCTIONAL PROTEIN GLMU"/>
    <property type="match status" value="1"/>
</dbReference>
<dbReference type="PANTHER" id="PTHR43584">
    <property type="entry name" value="NUCLEOTIDYL TRANSFERASE"/>
    <property type="match status" value="1"/>
</dbReference>
<dbReference type="Pfam" id="PF00132">
    <property type="entry name" value="Hexapep"/>
    <property type="match status" value="2"/>
</dbReference>
<dbReference type="Pfam" id="PF12804">
    <property type="entry name" value="NTP_transf_3"/>
    <property type="match status" value="1"/>
</dbReference>
<dbReference type="SUPFAM" id="SSF53448">
    <property type="entry name" value="Nucleotide-diphospho-sugar transferases"/>
    <property type="match status" value="1"/>
</dbReference>
<dbReference type="SUPFAM" id="SSF51161">
    <property type="entry name" value="Trimeric LpxA-like enzymes"/>
    <property type="match status" value="1"/>
</dbReference>
<dbReference type="PROSITE" id="PS00101">
    <property type="entry name" value="HEXAPEP_TRANSFERASES"/>
    <property type="match status" value="1"/>
</dbReference>
<keyword id="KW-0012">Acyltransferase</keyword>
<keyword id="KW-0133">Cell shape</keyword>
<keyword id="KW-0961">Cell wall biogenesis/degradation</keyword>
<keyword id="KW-0963">Cytoplasm</keyword>
<keyword id="KW-0460">Magnesium</keyword>
<keyword id="KW-0479">Metal-binding</keyword>
<keyword id="KW-0511">Multifunctional enzyme</keyword>
<keyword id="KW-0548">Nucleotidyltransferase</keyword>
<keyword id="KW-0573">Peptidoglycan synthesis</keyword>
<keyword id="KW-0677">Repeat</keyword>
<keyword id="KW-0808">Transferase</keyword>
<proteinExistence type="inferred from homology"/>
<protein>
    <recommendedName>
        <fullName evidence="1">Bifunctional protein GlmU</fullName>
    </recommendedName>
    <domain>
        <recommendedName>
            <fullName evidence="1">UDP-N-acetylglucosamine pyrophosphorylase</fullName>
            <ecNumber evidence="1">2.7.7.23</ecNumber>
        </recommendedName>
        <alternativeName>
            <fullName evidence="1">N-acetylglucosamine-1-phosphate uridyltransferase</fullName>
        </alternativeName>
    </domain>
    <domain>
        <recommendedName>
            <fullName evidence="1">Glucosamine-1-phosphate N-acetyltransferase</fullName>
            <ecNumber evidence="1">2.3.1.157</ecNumber>
        </recommendedName>
    </domain>
</protein>
<gene>
    <name evidence="1" type="primary">glmU</name>
    <name type="ordered locus">RL2381</name>
</gene>
<reference key="1">
    <citation type="journal article" date="2006" name="Genome Biol.">
        <title>The genome of Rhizobium leguminosarum has recognizable core and accessory components.</title>
        <authorList>
            <person name="Young J.P.W."/>
            <person name="Crossman L.C."/>
            <person name="Johnston A.W.B."/>
            <person name="Thomson N.R."/>
            <person name="Ghazoui Z.F."/>
            <person name="Hull K.H."/>
            <person name="Wexler M."/>
            <person name="Curson A.R.J."/>
            <person name="Todd J.D."/>
            <person name="Poole P.S."/>
            <person name="Mauchline T.H."/>
            <person name="East A.K."/>
            <person name="Quail M.A."/>
            <person name="Churcher C."/>
            <person name="Arrowsmith C."/>
            <person name="Cherevach I."/>
            <person name="Chillingworth T."/>
            <person name="Clarke K."/>
            <person name="Cronin A."/>
            <person name="Davis P."/>
            <person name="Fraser A."/>
            <person name="Hance Z."/>
            <person name="Hauser H."/>
            <person name="Jagels K."/>
            <person name="Moule S."/>
            <person name="Mungall K."/>
            <person name="Norbertczak H."/>
            <person name="Rabbinowitsch E."/>
            <person name="Sanders M."/>
            <person name="Simmonds M."/>
            <person name="Whitehead S."/>
            <person name="Parkhill J."/>
        </authorList>
    </citation>
    <scope>NUCLEOTIDE SEQUENCE [LARGE SCALE GENOMIC DNA]</scope>
    <source>
        <strain>DSM 114642 / LMG 32736 / 3841</strain>
    </source>
</reference>
<name>GLMU_RHIJ3</name>